<comment type="function">
    <text evidence="1">Catalyzes the removal of elemental sulfur and selenium atoms from L-cysteine, L-cystine, L-selenocysteine, and L-selenocystine to produce L-alanine.</text>
</comment>
<comment type="catalytic activity">
    <reaction>
        <text>(sulfur carrier)-H + L-cysteine = (sulfur carrier)-SH + L-alanine</text>
        <dbReference type="Rhea" id="RHEA:43892"/>
        <dbReference type="Rhea" id="RHEA-COMP:14737"/>
        <dbReference type="Rhea" id="RHEA-COMP:14739"/>
        <dbReference type="ChEBI" id="CHEBI:29917"/>
        <dbReference type="ChEBI" id="CHEBI:35235"/>
        <dbReference type="ChEBI" id="CHEBI:57972"/>
        <dbReference type="ChEBI" id="CHEBI:64428"/>
        <dbReference type="EC" id="2.8.1.7"/>
    </reaction>
</comment>
<comment type="cofactor">
    <cofactor evidence="1">
        <name>pyridoxal 5'-phosphate</name>
        <dbReference type="ChEBI" id="CHEBI:597326"/>
    </cofactor>
</comment>
<comment type="similarity">
    <text evidence="2">Belongs to the class-V pyridoxal-phosphate-dependent aminotransferase family. Csd subfamily.</text>
</comment>
<reference key="1">
    <citation type="submission" date="1999-03" db="EMBL/GenBank/DDBJ databases">
        <authorList>
            <person name="Nashimoto H."/>
        </authorList>
    </citation>
    <scope>NUCLEOTIDE SEQUENCE [GENOMIC DNA]</scope>
</reference>
<reference key="2">
    <citation type="journal article" date="2002" name="Environ. Microbiol.">
        <title>Complete genome sequence and comparative analysis of the metabolically versatile Pseudomonas putida KT2440.</title>
        <authorList>
            <person name="Nelson K.E."/>
            <person name="Weinel C."/>
            <person name="Paulsen I.T."/>
            <person name="Dodson R.J."/>
            <person name="Hilbert H."/>
            <person name="Martins dos Santos V.A.P."/>
            <person name="Fouts D.E."/>
            <person name="Gill S.R."/>
            <person name="Pop M."/>
            <person name="Holmes M."/>
            <person name="Brinkac L.M."/>
            <person name="Beanan M.J."/>
            <person name="DeBoy R.T."/>
            <person name="Daugherty S.C."/>
            <person name="Kolonay J.F."/>
            <person name="Madupu R."/>
            <person name="Nelson W.C."/>
            <person name="White O."/>
            <person name="Peterson J.D."/>
            <person name="Khouri H.M."/>
            <person name="Hance I."/>
            <person name="Chris Lee P."/>
            <person name="Holtzapple E.K."/>
            <person name="Scanlan D."/>
            <person name="Tran K."/>
            <person name="Moazzez A."/>
            <person name="Utterback T.R."/>
            <person name="Rizzo M."/>
            <person name="Lee K."/>
            <person name="Kosack D."/>
            <person name="Moestl D."/>
            <person name="Wedler H."/>
            <person name="Lauber J."/>
            <person name="Stjepandic D."/>
            <person name="Hoheisel J."/>
            <person name="Straetz M."/>
            <person name="Heim S."/>
            <person name="Kiewitz C."/>
            <person name="Eisen J.A."/>
            <person name="Timmis K.N."/>
            <person name="Duesterhoeft A."/>
            <person name="Tuemmler B."/>
            <person name="Fraser C.M."/>
        </authorList>
    </citation>
    <scope>NUCLEOTIDE SEQUENCE [LARGE SCALE GENOMIC DNA]</scope>
    <source>
        <strain>ATCC 47054 / DSM 6125 / CFBP 8728 / NCIMB 11950 / KT2440</strain>
    </source>
</reference>
<dbReference type="EC" id="2.8.1.7"/>
<dbReference type="EMBL" id="AB024602">
    <property type="protein sequence ID" value="BAA75914.1"/>
    <property type="molecule type" value="Genomic_DNA"/>
</dbReference>
<dbReference type="EMBL" id="AE015451">
    <property type="protein sequence ID" value="AAN67150.1"/>
    <property type="molecule type" value="Genomic_DNA"/>
</dbReference>
<dbReference type="RefSeq" id="NP_743686.1">
    <property type="nucleotide sequence ID" value="NC_002947.4"/>
</dbReference>
<dbReference type="RefSeq" id="WP_010952615.1">
    <property type="nucleotide sequence ID" value="NZ_CP169744.1"/>
</dbReference>
<dbReference type="SMR" id="Q9Z408"/>
<dbReference type="STRING" id="160488.PP_1529"/>
<dbReference type="PaxDb" id="160488-PP_1529"/>
<dbReference type="KEGG" id="ppu:PP_1529"/>
<dbReference type="PATRIC" id="fig|160488.4.peg.1618"/>
<dbReference type="eggNOG" id="COG0520">
    <property type="taxonomic scope" value="Bacteria"/>
</dbReference>
<dbReference type="HOGENOM" id="CLU_003433_2_5_6"/>
<dbReference type="OrthoDB" id="9808002at2"/>
<dbReference type="PhylomeDB" id="Q9Z408"/>
<dbReference type="BioCyc" id="PPUT160488:G1G01-1620-MONOMER"/>
<dbReference type="Proteomes" id="UP000000556">
    <property type="component" value="Chromosome"/>
</dbReference>
<dbReference type="GO" id="GO:0031071">
    <property type="term" value="F:cysteine desulfurase activity"/>
    <property type="evidence" value="ECO:0007669"/>
    <property type="project" value="UniProtKB-EC"/>
</dbReference>
<dbReference type="GO" id="GO:0030170">
    <property type="term" value="F:pyridoxal phosphate binding"/>
    <property type="evidence" value="ECO:0007669"/>
    <property type="project" value="InterPro"/>
</dbReference>
<dbReference type="GO" id="GO:0006534">
    <property type="term" value="P:cysteine metabolic process"/>
    <property type="evidence" value="ECO:0007669"/>
    <property type="project" value="InterPro"/>
</dbReference>
<dbReference type="CDD" id="cd06453">
    <property type="entry name" value="SufS_like"/>
    <property type="match status" value="1"/>
</dbReference>
<dbReference type="Gene3D" id="3.90.1150.10">
    <property type="entry name" value="Aspartate Aminotransferase, domain 1"/>
    <property type="match status" value="1"/>
</dbReference>
<dbReference type="Gene3D" id="3.40.640.10">
    <property type="entry name" value="Type I PLP-dependent aspartate aminotransferase-like (Major domain)"/>
    <property type="match status" value="1"/>
</dbReference>
<dbReference type="InterPro" id="IPR000192">
    <property type="entry name" value="Aminotrans_V_dom"/>
</dbReference>
<dbReference type="InterPro" id="IPR020578">
    <property type="entry name" value="Aminotrans_V_PyrdxlP_BS"/>
</dbReference>
<dbReference type="InterPro" id="IPR010970">
    <property type="entry name" value="Cys_dSase_SufS"/>
</dbReference>
<dbReference type="InterPro" id="IPR015424">
    <property type="entry name" value="PyrdxlP-dep_Trfase"/>
</dbReference>
<dbReference type="InterPro" id="IPR015421">
    <property type="entry name" value="PyrdxlP-dep_Trfase_major"/>
</dbReference>
<dbReference type="InterPro" id="IPR015422">
    <property type="entry name" value="PyrdxlP-dep_Trfase_small"/>
</dbReference>
<dbReference type="PANTHER" id="PTHR43586">
    <property type="entry name" value="CYSTEINE DESULFURASE"/>
    <property type="match status" value="1"/>
</dbReference>
<dbReference type="PANTHER" id="PTHR43586:SF8">
    <property type="entry name" value="CYSTEINE DESULFURASE 1, CHLOROPLASTIC"/>
    <property type="match status" value="1"/>
</dbReference>
<dbReference type="Pfam" id="PF00266">
    <property type="entry name" value="Aminotran_5"/>
    <property type="match status" value="1"/>
</dbReference>
<dbReference type="SUPFAM" id="SSF53383">
    <property type="entry name" value="PLP-dependent transferases"/>
    <property type="match status" value="1"/>
</dbReference>
<dbReference type="PROSITE" id="PS00595">
    <property type="entry name" value="AA_TRANSFER_CLASS_5"/>
    <property type="match status" value="1"/>
</dbReference>
<accession>Q9Z408</accession>
<feature type="chain" id="PRO_0000150308" description="Probable cysteine desulfurase">
    <location>
        <begin position="1"/>
        <end position="401"/>
    </location>
</feature>
<feature type="modified residue" description="N6-(pyridoxal phosphate)lysine" evidence="1">
    <location>
        <position position="223"/>
    </location>
</feature>
<sequence length="401" mass="43287">MFQPSPWRADFPAIAALQRQHQTYLDSAATTQKPQALLDALSHYYGHGAANVHRAQHLPGALATQAFETSRDKVAAWLNAADSRQIVFTHGATSALNLLAYGLEHRLEAGDEIAISALEHHANLLPWQQLAHRRNLHLVVLPLDAHGRIDQDQALQLIGPRTRVLAISQLSNVLGTWQPLPALLAHARAQGALTVVDGAQGVVHGRQDMQQLGCDFYVFSSHKLYGPDGVGVLYGRAQALELLRHWQFGGEMVQLAEYHSASFRPAPLGFEAGTPPIAGVIGLGATLDYLASLDAHAVAAHEASLHQHLLRGLGDREGVRVLGAPQTALASFVIEGVHNADIAHLLTEQGIAVRAGHHCAMPLLKGLGLEGAIRVSLGLYNDSDDVQRFFDALDQGLELLR</sequence>
<evidence type="ECO:0000250" key="1"/>
<evidence type="ECO:0000305" key="2"/>
<keyword id="KW-0663">Pyridoxal phosphate</keyword>
<keyword id="KW-1185">Reference proteome</keyword>
<keyword id="KW-0808">Transferase</keyword>
<protein>
    <recommendedName>
        <fullName>Probable cysteine desulfurase</fullName>
        <ecNumber>2.8.1.7</ecNumber>
    </recommendedName>
</protein>
<proteinExistence type="inferred from homology"/>
<gene>
    <name type="primary">csdA</name>
    <name type="ordered locus">PP_1529</name>
</gene>
<organism>
    <name type="scientific">Pseudomonas putida (strain ATCC 47054 / DSM 6125 / CFBP 8728 / NCIMB 11950 / KT2440)</name>
    <dbReference type="NCBI Taxonomy" id="160488"/>
    <lineage>
        <taxon>Bacteria</taxon>
        <taxon>Pseudomonadati</taxon>
        <taxon>Pseudomonadota</taxon>
        <taxon>Gammaproteobacteria</taxon>
        <taxon>Pseudomonadales</taxon>
        <taxon>Pseudomonadaceae</taxon>
        <taxon>Pseudomonas</taxon>
    </lineage>
</organism>
<name>CSD_PSEPK</name>